<accession>Q0BNQ6</accession>
<evidence type="ECO:0000255" key="1">
    <source>
        <dbReference type="HAMAP-Rule" id="MF_01315"/>
    </source>
</evidence>
<evidence type="ECO:0000256" key="2">
    <source>
        <dbReference type="SAM" id="MobiDB-lite"/>
    </source>
</evidence>
<evidence type="ECO:0000305" key="3"/>
<proteinExistence type="inferred from homology"/>
<reference key="1">
    <citation type="journal article" date="2006" name="J. Bacteriol.">
        <title>Chromosome rearrangement and diversification of Francisella tularensis revealed by the type B (OSU18) genome sequence.</title>
        <authorList>
            <person name="Petrosino J.F."/>
            <person name="Xiang Q."/>
            <person name="Karpathy S.E."/>
            <person name="Jiang H."/>
            <person name="Yerrapragada S."/>
            <person name="Liu Y."/>
            <person name="Gioia J."/>
            <person name="Hemphill L."/>
            <person name="Gonzalez A."/>
            <person name="Raghavan T.M."/>
            <person name="Uzman A."/>
            <person name="Fox G.E."/>
            <person name="Highlander S."/>
            <person name="Reichard M."/>
            <person name="Morton R.J."/>
            <person name="Clinkenbeard K.D."/>
            <person name="Weinstock G.M."/>
        </authorList>
    </citation>
    <scope>NUCLEOTIDE SEQUENCE [LARGE SCALE GENOMIC DNA]</scope>
    <source>
        <strain>OSU18</strain>
    </source>
</reference>
<sequence length="118" mass="13378">MARIAGVNIPVHKHTVIGLTSIYGIGKTRAQQICQTCNVDPTVKIKDLSEEQVESLRTEVAKFTVEGDLRREVSMDIKRLMDLGCFRGRRHRRSLPVRGQRTKTNARTRKGPRKPIKA</sequence>
<gene>
    <name evidence="1" type="primary">rpsM</name>
    <name type="ordered locus">FTH_0253</name>
</gene>
<name>RS13_FRATO</name>
<protein>
    <recommendedName>
        <fullName evidence="1">Small ribosomal subunit protein uS13</fullName>
    </recommendedName>
    <alternativeName>
        <fullName evidence="3">30S ribosomal protein S13</fullName>
    </alternativeName>
</protein>
<feature type="chain" id="PRO_0000306605" description="Small ribosomal subunit protein uS13">
    <location>
        <begin position="1"/>
        <end position="118"/>
    </location>
</feature>
<feature type="region of interest" description="Disordered" evidence="2">
    <location>
        <begin position="91"/>
        <end position="118"/>
    </location>
</feature>
<comment type="function">
    <text evidence="1">Located at the top of the head of the 30S subunit, it contacts several helices of the 16S rRNA. In the 70S ribosome it contacts the 23S rRNA (bridge B1a) and protein L5 of the 50S subunit (bridge B1b), connecting the 2 subunits; these bridges are implicated in subunit movement. Contacts the tRNAs in the A and P-sites.</text>
</comment>
<comment type="subunit">
    <text evidence="1">Part of the 30S ribosomal subunit. Forms a loose heterodimer with protein S19. Forms two bridges to the 50S subunit in the 70S ribosome.</text>
</comment>
<comment type="similarity">
    <text evidence="1">Belongs to the universal ribosomal protein uS13 family.</text>
</comment>
<dbReference type="EMBL" id="CP000437">
    <property type="protein sequence ID" value="ABI82278.1"/>
    <property type="molecule type" value="Genomic_DNA"/>
</dbReference>
<dbReference type="RefSeq" id="WP_003014373.1">
    <property type="nucleotide sequence ID" value="NC_017463.1"/>
</dbReference>
<dbReference type="SMR" id="Q0BNQ6"/>
<dbReference type="GeneID" id="75264239"/>
<dbReference type="KEGG" id="fth:FTH_0253"/>
<dbReference type="GO" id="GO:0005829">
    <property type="term" value="C:cytosol"/>
    <property type="evidence" value="ECO:0007669"/>
    <property type="project" value="TreeGrafter"/>
</dbReference>
<dbReference type="GO" id="GO:0015935">
    <property type="term" value="C:small ribosomal subunit"/>
    <property type="evidence" value="ECO:0007669"/>
    <property type="project" value="TreeGrafter"/>
</dbReference>
<dbReference type="GO" id="GO:0019843">
    <property type="term" value="F:rRNA binding"/>
    <property type="evidence" value="ECO:0007669"/>
    <property type="project" value="UniProtKB-UniRule"/>
</dbReference>
<dbReference type="GO" id="GO:0003735">
    <property type="term" value="F:structural constituent of ribosome"/>
    <property type="evidence" value="ECO:0007669"/>
    <property type="project" value="InterPro"/>
</dbReference>
<dbReference type="GO" id="GO:0000049">
    <property type="term" value="F:tRNA binding"/>
    <property type="evidence" value="ECO:0007669"/>
    <property type="project" value="UniProtKB-UniRule"/>
</dbReference>
<dbReference type="GO" id="GO:0006412">
    <property type="term" value="P:translation"/>
    <property type="evidence" value="ECO:0007669"/>
    <property type="project" value="UniProtKB-UniRule"/>
</dbReference>
<dbReference type="FunFam" id="1.10.8.50:FF:000001">
    <property type="entry name" value="30S ribosomal protein S13"/>
    <property type="match status" value="1"/>
</dbReference>
<dbReference type="FunFam" id="4.10.910.10:FF:000001">
    <property type="entry name" value="30S ribosomal protein S13"/>
    <property type="match status" value="1"/>
</dbReference>
<dbReference type="Gene3D" id="1.10.8.50">
    <property type="match status" value="1"/>
</dbReference>
<dbReference type="Gene3D" id="4.10.910.10">
    <property type="entry name" value="30s ribosomal protein s13, domain 2"/>
    <property type="match status" value="1"/>
</dbReference>
<dbReference type="HAMAP" id="MF_01315">
    <property type="entry name" value="Ribosomal_uS13"/>
    <property type="match status" value="1"/>
</dbReference>
<dbReference type="InterPro" id="IPR027437">
    <property type="entry name" value="Rbsml_uS13_C"/>
</dbReference>
<dbReference type="InterPro" id="IPR001892">
    <property type="entry name" value="Ribosomal_uS13"/>
</dbReference>
<dbReference type="InterPro" id="IPR010979">
    <property type="entry name" value="Ribosomal_uS13-like_H2TH"/>
</dbReference>
<dbReference type="InterPro" id="IPR019980">
    <property type="entry name" value="Ribosomal_uS13_bac-type"/>
</dbReference>
<dbReference type="InterPro" id="IPR018269">
    <property type="entry name" value="Ribosomal_uS13_CS"/>
</dbReference>
<dbReference type="NCBIfam" id="TIGR03631">
    <property type="entry name" value="uS13_bact"/>
    <property type="match status" value="1"/>
</dbReference>
<dbReference type="PANTHER" id="PTHR10871">
    <property type="entry name" value="30S RIBOSOMAL PROTEIN S13/40S RIBOSOMAL PROTEIN S18"/>
    <property type="match status" value="1"/>
</dbReference>
<dbReference type="PANTHER" id="PTHR10871:SF1">
    <property type="entry name" value="SMALL RIBOSOMAL SUBUNIT PROTEIN US13M"/>
    <property type="match status" value="1"/>
</dbReference>
<dbReference type="Pfam" id="PF00416">
    <property type="entry name" value="Ribosomal_S13"/>
    <property type="match status" value="1"/>
</dbReference>
<dbReference type="PIRSF" id="PIRSF002134">
    <property type="entry name" value="Ribosomal_S13"/>
    <property type="match status" value="1"/>
</dbReference>
<dbReference type="SUPFAM" id="SSF46946">
    <property type="entry name" value="S13-like H2TH domain"/>
    <property type="match status" value="1"/>
</dbReference>
<dbReference type="PROSITE" id="PS00646">
    <property type="entry name" value="RIBOSOMAL_S13_1"/>
    <property type="match status" value="1"/>
</dbReference>
<dbReference type="PROSITE" id="PS50159">
    <property type="entry name" value="RIBOSOMAL_S13_2"/>
    <property type="match status" value="1"/>
</dbReference>
<organism>
    <name type="scientific">Francisella tularensis subsp. holarctica (strain OSU18)</name>
    <dbReference type="NCBI Taxonomy" id="393011"/>
    <lineage>
        <taxon>Bacteria</taxon>
        <taxon>Pseudomonadati</taxon>
        <taxon>Pseudomonadota</taxon>
        <taxon>Gammaproteobacteria</taxon>
        <taxon>Thiotrichales</taxon>
        <taxon>Francisellaceae</taxon>
        <taxon>Francisella</taxon>
    </lineage>
</organism>
<keyword id="KW-0687">Ribonucleoprotein</keyword>
<keyword id="KW-0689">Ribosomal protein</keyword>
<keyword id="KW-0694">RNA-binding</keyword>
<keyword id="KW-0699">rRNA-binding</keyword>
<keyword id="KW-0820">tRNA-binding</keyword>